<reference key="1">
    <citation type="journal article" date="2001" name="Nature">
        <title>Genome sequence of enterohaemorrhagic Escherichia coli O157:H7.</title>
        <authorList>
            <person name="Perna N.T."/>
            <person name="Plunkett G. III"/>
            <person name="Burland V."/>
            <person name="Mau B."/>
            <person name="Glasner J.D."/>
            <person name="Rose D.J."/>
            <person name="Mayhew G.F."/>
            <person name="Evans P.S."/>
            <person name="Gregor J."/>
            <person name="Kirkpatrick H.A."/>
            <person name="Posfai G."/>
            <person name="Hackett J."/>
            <person name="Klink S."/>
            <person name="Boutin A."/>
            <person name="Shao Y."/>
            <person name="Miller L."/>
            <person name="Grotbeck E.J."/>
            <person name="Davis N.W."/>
            <person name="Lim A."/>
            <person name="Dimalanta E.T."/>
            <person name="Potamousis K."/>
            <person name="Apodaca J."/>
            <person name="Anantharaman T.S."/>
            <person name="Lin J."/>
            <person name="Yen G."/>
            <person name="Schwartz D.C."/>
            <person name="Welch R.A."/>
            <person name="Blattner F.R."/>
        </authorList>
    </citation>
    <scope>NUCLEOTIDE SEQUENCE [LARGE SCALE GENOMIC DNA]</scope>
    <source>
        <strain>O157:H7 / EDL933 / ATCC 700927 / EHEC</strain>
    </source>
</reference>
<reference key="2">
    <citation type="journal article" date="2001" name="DNA Res.">
        <title>Complete genome sequence of enterohemorrhagic Escherichia coli O157:H7 and genomic comparison with a laboratory strain K-12.</title>
        <authorList>
            <person name="Hayashi T."/>
            <person name="Makino K."/>
            <person name="Ohnishi M."/>
            <person name="Kurokawa K."/>
            <person name="Ishii K."/>
            <person name="Yokoyama K."/>
            <person name="Han C.-G."/>
            <person name="Ohtsubo E."/>
            <person name="Nakayama K."/>
            <person name="Murata T."/>
            <person name="Tanaka M."/>
            <person name="Tobe T."/>
            <person name="Iida T."/>
            <person name="Takami H."/>
            <person name="Honda T."/>
            <person name="Sasakawa C."/>
            <person name="Ogasawara N."/>
            <person name="Yasunaga T."/>
            <person name="Kuhara S."/>
            <person name="Shiba T."/>
            <person name="Hattori M."/>
            <person name="Shinagawa H."/>
        </authorList>
    </citation>
    <scope>NUCLEOTIDE SEQUENCE [LARGE SCALE GENOMIC DNA]</scope>
    <source>
        <strain>O157:H7 / Sakai / RIMD 0509952 / EHEC</strain>
    </source>
</reference>
<feature type="chain" id="PRO_0000208538" description="Probable ECA polymerase">
    <location>
        <begin position="1"/>
        <end position="450"/>
    </location>
</feature>
<feature type="transmembrane region" description="Helical" evidence="1">
    <location>
        <begin position="6"/>
        <end position="26"/>
    </location>
</feature>
<feature type="transmembrane region" description="Helical" evidence="1">
    <location>
        <begin position="37"/>
        <end position="57"/>
    </location>
</feature>
<feature type="transmembrane region" description="Helical" evidence="1">
    <location>
        <begin position="63"/>
        <end position="83"/>
    </location>
</feature>
<feature type="transmembrane region" description="Helical" evidence="1">
    <location>
        <begin position="118"/>
        <end position="138"/>
    </location>
</feature>
<feature type="transmembrane region" description="Helical" evidence="1">
    <location>
        <begin position="155"/>
        <end position="175"/>
    </location>
</feature>
<feature type="transmembrane region" description="Helical" evidence="1">
    <location>
        <begin position="181"/>
        <end position="201"/>
    </location>
</feature>
<feature type="transmembrane region" description="Helical" evidence="1">
    <location>
        <begin position="207"/>
        <end position="227"/>
    </location>
</feature>
<feature type="transmembrane region" description="Helical" evidence="1">
    <location>
        <begin position="228"/>
        <end position="248"/>
    </location>
</feature>
<feature type="transmembrane region" description="Helical" evidence="1">
    <location>
        <begin position="341"/>
        <end position="361"/>
    </location>
</feature>
<feature type="transmembrane region" description="Helical" evidence="1">
    <location>
        <begin position="378"/>
        <end position="398"/>
    </location>
</feature>
<feature type="transmembrane region" description="Helical" evidence="1">
    <location>
        <begin position="410"/>
        <end position="430"/>
    </location>
</feature>
<evidence type="ECO:0000255" key="1">
    <source>
        <dbReference type="HAMAP-Rule" id="MF_01003"/>
    </source>
</evidence>
<accession>Q8XAQ5</accession>
<sequence>MSLLQFSGLFVVWLLCTLFIATLTWFEFRRVRFNFNVFFSLLFLLTFFFGFPLTSVLVFRFDVGVAPPEILLQALLSAGCFYAVYYVTYKTRLRKRVADVPRRPLFTMNRVETNLTWVILMGIALVSVGIFFMHNGFLLFRLNSYSQIFSSEVSGVALKRFFYFFIPAMLVVYFLRQDSKAWLFFLVSTVAFGLLTYMIVGGTRANIIIAFAIFLFIGIIRGWISLWMLAAAGVLGIVGMFWLALKRYGMNVSGDEAFYTFLYLTRDTFSPWENLALLLQNYDNIDFQGLAPIVRDFYVFIPSWLWPGRPSMVLNSANYFTWEVLNNHSGLAISPTLIGSLVVMGGALFIPLGAIVVGLIIKWFDWLYELGNRETNRYKAAILHSFCFGAIFNMIVLAREGLDSFVSRVVFFIVVFGACLMIAKLLYWLFESAGLIHKRTKSSLRTQVEG</sequence>
<gene>
    <name evidence="1" type="primary">wzyE</name>
    <name type="synonym">wzy</name>
    <name type="ordered locus">Z5305</name>
    <name type="ordered locus">ECs4727</name>
</gene>
<keyword id="KW-0997">Cell inner membrane</keyword>
<keyword id="KW-1003">Cell membrane</keyword>
<keyword id="KW-0472">Membrane</keyword>
<keyword id="KW-1185">Reference proteome</keyword>
<keyword id="KW-0812">Transmembrane</keyword>
<keyword id="KW-1133">Transmembrane helix</keyword>
<name>WZYE_ECO57</name>
<proteinExistence type="inferred from homology"/>
<organism>
    <name type="scientific">Escherichia coli O157:H7</name>
    <dbReference type="NCBI Taxonomy" id="83334"/>
    <lineage>
        <taxon>Bacteria</taxon>
        <taxon>Pseudomonadati</taxon>
        <taxon>Pseudomonadota</taxon>
        <taxon>Gammaproteobacteria</taxon>
        <taxon>Enterobacterales</taxon>
        <taxon>Enterobacteriaceae</taxon>
        <taxon>Escherichia</taxon>
    </lineage>
</organism>
<protein>
    <recommendedName>
        <fullName evidence="1">Probable ECA polymerase</fullName>
    </recommendedName>
</protein>
<comment type="function">
    <text evidence="1">Probably involved in the polymerization of enterobacterial common antigen (ECA) trisaccharide repeat units.</text>
</comment>
<comment type="pathway">
    <text evidence="1">Bacterial outer membrane biogenesis; enterobacterial common antigen biosynthesis.</text>
</comment>
<comment type="subunit">
    <text evidence="1">Probably part of a complex composed of WzxE, WzyE and WzzE.</text>
</comment>
<comment type="subcellular location">
    <subcellularLocation>
        <location evidence="1">Cell inner membrane</location>
        <topology evidence="1">Multi-pass membrane protein</topology>
    </subcellularLocation>
</comment>
<comment type="similarity">
    <text evidence="1">Belongs to the WzyE family.</text>
</comment>
<dbReference type="EMBL" id="AE005174">
    <property type="protein sequence ID" value="AAG58989.1"/>
    <property type="molecule type" value="Genomic_DNA"/>
</dbReference>
<dbReference type="EMBL" id="BA000007">
    <property type="protein sequence ID" value="BAB38150.1"/>
    <property type="molecule type" value="Genomic_DNA"/>
</dbReference>
<dbReference type="PIR" id="A86066">
    <property type="entry name" value="A86066"/>
</dbReference>
<dbReference type="PIR" id="G91219">
    <property type="entry name" value="G91219"/>
</dbReference>
<dbReference type="RefSeq" id="NP_312754.1">
    <property type="nucleotide sequence ID" value="NC_002695.1"/>
</dbReference>
<dbReference type="RefSeq" id="WP_000055132.1">
    <property type="nucleotide sequence ID" value="NZ_VOAI01000017.1"/>
</dbReference>
<dbReference type="STRING" id="155864.Z5305"/>
<dbReference type="GeneID" id="75204784"/>
<dbReference type="GeneID" id="915114"/>
<dbReference type="KEGG" id="ece:Z5305"/>
<dbReference type="KEGG" id="ecs:ECs_4727"/>
<dbReference type="PATRIC" id="fig|386585.9.peg.4931"/>
<dbReference type="eggNOG" id="ENOG502Z7MA">
    <property type="taxonomic scope" value="Bacteria"/>
</dbReference>
<dbReference type="HOGENOM" id="CLU_049711_0_0_6"/>
<dbReference type="OMA" id="WLWPDRP"/>
<dbReference type="UniPathway" id="UPA00566"/>
<dbReference type="Proteomes" id="UP000000558">
    <property type="component" value="Chromosome"/>
</dbReference>
<dbReference type="Proteomes" id="UP000002519">
    <property type="component" value="Chromosome"/>
</dbReference>
<dbReference type="GO" id="GO:0005886">
    <property type="term" value="C:plasma membrane"/>
    <property type="evidence" value="ECO:0007669"/>
    <property type="project" value="UniProtKB-SubCell"/>
</dbReference>
<dbReference type="GO" id="GO:0009246">
    <property type="term" value="P:enterobacterial common antigen biosynthetic process"/>
    <property type="evidence" value="ECO:0007669"/>
    <property type="project" value="UniProtKB-UniRule"/>
</dbReference>
<dbReference type="HAMAP" id="MF_01003">
    <property type="entry name" value="WzyE"/>
    <property type="match status" value="1"/>
</dbReference>
<dbReference type="InterPro" id="IPR010691">
    <property type="entry name" value="WzyE"/>
</dbReference>
<dbReference type="NCBIfam" id="NF002820">
    <property type="entry name" value="PRK02975.1"/>
    <property type="match status" value="1"/>
</dbReference>
<dbReference type="Pfam" id="PF06899">
    <property type="entry name" value="WzyE"/>
    <property type="match status" value="1"/>
</dbReference>